<name>MPGP_ECOLI</name>
<protein>
    <recommendedName>
        <fullName evidence="1 3">Mannosyl-3-phosphoglycerate phosphatase</fullName>
        <shortName evidence="1">MPGP</shortName>
        <ecNumber evidence="1 2">3.1.3.70</ecNumber>
    </recommendedName>
</protein>
<organism>
    <name type="scientific">Escherichia coli (strain K12)</name>
    <dbReference type="NCBI Taxonomy" id="83333"/>
    <lineage>
        <taxon>Bacteria</taxon>
        <taxon>Pseudomonadati</taxon>
        <taxon>Pseudomonadota</taxon>
        <taxon>Gammaproteobacteria</taxon>
        <taxon>Enterobacterales</taxon>
        <taxon>Enterobacteriaceae</taxon>
        <taxon>Escherichia</taxon>
    </lineage>
</organism>
<gene>
    <name type="primary">yedP</name>
    <name type="ordered locus">b1955</name>
    <name type="ordered locus">JW1938</name>
</gene>
<feature type="chain" id="PRO_0000184974" description="Mannosyl-3-phosphoglycerate phosphatase">
    <location>
        <begin position="1"/>
        <end position="271"/>
    </location>
</feature>
<feature type="active site" description="Nucleophile" evidence="1 4">
    <location>
        <position position="13"/>
    </location>
</feature>
<feature type="binding site" evidence="1">
    <location>
        <position position="13"/>
    </location>
    <ligand>
        <name>Mg(2+)</name>
        <dbReference type="ChEBI" id="CHEBI:18420"/>
    </ligand>
</feature>
<feature type="binding site" evidence="1">
    <location>
        <position position="15"/>
    </location>
    <ligand>
        <name>Mg(2+)</name>
        <dbReference type="ChEBI" id="CHEBI:18420"/>
    </ligand>
</feature>
<feature type="binding site" evidence="1">
    <location>
        <position position="214"/>
    </location>
    <ligand>
        <name>Mg(2+)</name>
        <dbReference type="ChEBI" id="CHEBI:18420"/>
    </ligand>
</feature>
<feature type="strand" evidence="6">
    <location>
        <begin position="8"/>
        <end position="13"/>
    </location>
</feature>
<feature type="turn" evidence="6">
    <location>
        <begin position="15"/>
        <end position="17"/>
    </location>
</feature>
<feature type="helix" evidence="6">
    <location>
        <begin position="30"/>
        <end position="38"/>
    </location>
</feature>
<feature type="strand" evidence="6">
    <location>
        <begin position="43"/>
        <end position="46"/>
    </location>
</feature>
<feature type="helix" evidence="6">
    <location>
        <begin position="51"/>
        <end position="60"/>
    </location>
</feature>
<feature type="strand" evidence="6">
    <location>
        <begin position="68"/>
        <end position="70"/>
    </location>
</feature>
<feature type="helix" evidence="6">
    <location>
        <begin position="71"/>
        <end position="73"/>
    </location>
</feature>
<feature type="strand" evidence="6">
    <location>
        <begin position="75"/>
        <end position="77"/>
    </location>
</feature>
<feature type="turn" evidence="6">
    <location>
        <begin position="86"/>
        <end position="89"/>
    </location>
</feature>
<feature type="strand" evidence="6">
    <location>
        <begin position="90"/>
        <end position="92"/>
    </location>
</feature>
<feature type="helix" evidence="6">
    <location>
        <begin position="97"/>
        <end position="111"/>
    </location>
</feature>
<feature type="strand" evidence="6">
    <location>
        <begin position="115"/>
        <end position="117"/>
    </location>
</feature>
<feature type="helix" evidence="6">
    <location>
        <begin position="118"/>
        <end position="120"/>
    </location>
</feature>
<feature type="helix" evidence="6">
    <location>
        <begin position="123"/>
        <end position="130"/>
    </location>
</feature>
<feature type="helix" evidence="6">
    <location>
        <begin position="134"/>
        <end position="141"/>
    </location>
</feature>
<feature type="strand" evidence="6">
    <location>
        <begin position="147"/>
        <end position="151"/>
    </location>
</feature>
<feature type="helix" evidence="6">
    <location>
        <begin position="155"/>
        <end position="167"/>
    </location>
</feature>
<feature type="strand" evidence="6">
    <location>
        <begin position="170"/>
        <end position="174"/>
    </location>
</feature>
<feature type="strand" evidence="6">
    <location>
        <begin position="179"/>
        <end position="183"/>
    </location>
</feature>
<feature type="helix" evidence="6">
    <location>
        <begin position="188"/>
        <end position="203"/>
    </location>
</feature>
<feature type="strand" evidence="6">
    <location>
        <begin position="208"/>
        <end position="215"/>
    </location>
</feature>
<feature type="helix" evidence="6">
    <location>
        <begin position="216"/>
        <end position="218"/>
    </location>
</feature>
<feature type="helix" evidence="6">
    <location>
        <begin position="219"/>
        <end position="223"/>
    </location>
</feature>
<feature type="strand" evidence="6">
    <location>
        <begin position="225"/>
        <end position="230"/>
    </location>
</feature>
<reference key="1">
    <citation type="journal article" date="1997" name="Science">
        <title>The complete genome sequence of Escherichia coli K-12.</title>
        <authorList>
            <person name="Blattner F.R."/>
            <person name="Plunkett G. III"/>
            <person name="Bloch C.A."/>
            <person name="Perna N.T."/>
            <person name="Burland V."/>
            <person name="Riley M."/>
            <person name="Collado-Vides J."/>
            <person name="Glasner J.D."/>
            <person name="Rode C.K."/>
            <person name="Mayhew G.F."/>
            <person name="Gregor J."/>
            <person name="Davis N.W."/>
            <person name="Kirkpatrick H.A."/>
            <person name="Goeden M.A."/>
            <person name="Rose D.J."/>
            <person name="Mau B."/>
            <person name="Shao Y."/>
        </authorList>
    </citation>
    <scope>NUCLEOTIDE SEQUENCE [LARGE SCALE GENOMIC DNA]</scope>
    <source>
        <strain>K12 / MG1655 / ATCC 47076</strain>
    </source>
</reference>
<reference key="2">
    <citation type="journal article" date="2006" name="Mol. Syst. Biol.">
        <title>Highly accurate genome sequences of Escherichia coli K-12 strains MG1655 and W3110.</title>
        <authorList>
            <person name="Hayashi K."/>
            <person name="Morooka N."/>
            <person name="Yamamoto Y."/>
            <person name="Fujita K."/>
            <person name="Isono K."/>
            <person name="Choi S."/>
            <person name="Ohtsubo E."/>
            <person name="Baba T."/>
            <person name="Wanner B.L."/>
            <person name="Mori H."/>
            <person name="Horiuchi T."/>
        </authorList>
    </citation>
    <scope>NUCLEOTIDE SEQUENCE [LARGE SCALE GENOMIC DNA]</scope>
    <source>
        <strain>K12 / W3110 / ATCC 27325 / DSM 5911</strain>
    </source>
</reference>
<reference key="3">
    <citation type="journal article" date="2015" name="Proc. Natl. Acad. Sci. U.S.A.">
        <title>Panoramic view of a superfamily of phosphatases through substrate profiling.</title>
        <authorList>
            <person name="Huang H."/>
            <person name="Pandya C."/>
            <person name="Liu C."/>
            <person name="Al-Obaidi N.F."/>
            <person name="Wang M."/>
            <person name="Zheng L."/>
            <person name="Toews Keating S."/>
            <person name="Aono M."/>
            <person name="Love J.D."/>
            <person name="Evans B."/>
            <person name="Seidel R.D."/>
            <person name="Hillerich B.S."/>
            <person name="Garforth S.J."/>
            <person name="Almo S.C."/>
            <person name="Mariano P.S."/>
            <person name="Dunaway-Mariano D."/>
            <person name="Allen K.N."/>
            <person name="Farelli J.D."/>
        </authorList>
    </citation>
    <scope>CATALYTIC ACTIVITY</scope>
    <scope>COFACTOR</scope>
</reference>
<reference evidence="5" key="4">
    <citation type="submission" date="2004-10" db="PDB data bank">
        <title>Crystal Structure of YedP, phosphatase-like domain protein from Escherichia coli K12.</title>
        <authorList>
            <person name="Kim Y."/>
            <person name="Joachimiak A."/>
            <person name="Cymborowski M."/>
            <person name="Skarina T."/>
            <person name="Savchenko A."/>
            <person name="Edwards A."/>
        </authorList>
    </citation>
    <scope>X-RAY CRYSTALLOGRAPHY (2.26 ANGSTROMS)</scope>
</reference>
<comment type="catalytic activity">
    <reaction evidence="1 2">
        <text>2-O-(alpha-D-mannosyl)-3-phosphoglycerate + H2O = (2R)-2-O-(alpha-D-mannosyl)-glycerate + phosphate</text>
        <dbReference type="Rhea" id="RHEA:19309"/>
        <dbReference type="ChEBI" id="CHEBI:15377"/>
        <dbReference type="ChEBI" id="CHEBI:43474"/>
        <dbReference type="ChEBI" id="CHEBI:57541"/>
        <dbReference type="ChEBI" id="CHEBI:57744"/>
        <dbReference type="EC" id="3.1.3.70"/>
    </reaction>
</comment>
<comment type="cofactor">
    <cofactor evidence="1 2">
        <name>Mg(2+)</name>
        <dbReference type="ChEBI" id="CHEBI:18420"/>
    </cofactor>
</comment>
<comment type="subcellular location">
    <subcellularLocation>
        <location evidence="1">Cytoplasm</location>
    </subcellularLocation>
</comment>
<comment type="similarity">
    <text evidence="1">Belongs to the HAD-like hydrolase superfamily. MPGP family.</text>
</comment>
<evidence type="ECO:0000255" key="1">
    <source>
        <dbReference type="HAMAP-Rule" id="MF_00617"/>
    </source>
</evidence>
<evidence type="ECO:0000269" key="2">
    <source>
    </source>
</evidence>
<evidence type="ECO:0000303" key="3">
    <source>
    </source>
</evidence>
<evidence type="ECO:0000305" key="4"/>
<evidence type="ECO:0007744" key="5">
    <source>
        <dbReference type="PDB" id="1XVI"/>
    </source>
</evidence>
<evidence type="ECO:0007829" key="6">
    <source>
        <dbReference type="PDB" id="1XVI"/>
    </source>
</evidence>
<keyword id="KW-0002">3D-structure</keyword>
<keyword id="KW-0963">Cytoplasm</keyword>
<keyword id="KW-0378">Hydrolase</keyword>
<keyword id="KW-0460">Magnesium</keyword>
<keyword id="KW-0479">Metal-binding</keyword>
<keyword id="KW-1185">Reference proteome</keyword>
<sequence>MFSIQQPLLVFSDLDGTLLDSHSYDWQPAAPWLTRLREANVPVILCSSKTSAEMLYLQKTLGLQGLPLIAENGAVIQLAEQWQEIDGFPRIISGISHGEISLVLNTLREKEHFKFTTFDDVDDATIAEWTGLSRSQAALTQLHEASVTLIWRDSDERMAQFTARLNELGLQFMQGARFWHVLDASAGKDQAANWIIATYQQLSGKRPTTLGLGDGPNDAPLLEVMDYAVIVKGLNREGVHLHDEDPARVWRTQREGPEGWREGLDHFFSAR</sequence>
<dbReference type="EC" id="3.1.3.70" evidence="1 2"/>
<dbReference type="EMBL" id="U00096">
    <property type="protein sequence ID" value="AAC75021.1"/>
    <property type="molecule type" value="Genomic_DNA"/>
</dbReference>
<dbReference type="EMBL" id="AP009048">
    <property type="protein sequence ID" value="BAE76555.1"/>
    <property type="molecule type" value="Genomic_DNA"/>
</dbReference>
<dbReference type="PIR" id="G64959">
    <property type="entry name" value="G64959"/>
</dbReference>
<dbReference type="RefSeq" id="NP_416464.1">
    <property type="nucleotide sequence ID" value="NC_000913.3"/>
</dbReference>
<dbReference type="RefSeq" id="WP_000491520.1">
    <property type="nucleotide sequence ID" value="NZ_LN832404.1"/>
</dbReference>
<dbReference type="PDB" id="1XVI">
    <property type="method" value="X-ray"/>
    <property type="resolution" value="2.26 A"/>
    <property type="chains" value="A/B=1-271"/>
</dbReference>
<dbReference type="PDBsum" id="1XVI"/>
<dbReference type="SMR" id="P76329"/>
<dbReference type="BioGRID" id="4261051">
    <property type="interactions" value="19"/>
</dbReference>
<dbReference type="DIP" id="DIP-11848N"/>
<dbReference type="FunCoup" id="P76329">
    <property type="interactions" value="77"/>
</dbReference>
<dbReference type="IntAct" id="P76329">
    <property type="interactions" value="3"/>
</dbReference>
<dbReference type="STRING" id="511145.b1955"/>
<dbReference type="jPOST" id="P76329"/>
<dbReference type="PaxDb" id="511145-b1955"/>
<dbReference type="DNASU" id="946472"/>
<dbReference type="EnsemblBacteria" id="AAC75021">
    <property type="protein sequence ID" value="AAC75021"/>
    <property type="gene ID" value="b1955"/>
</dbReference>
<dbReference type="GeneID" id="946472"/>
<dbReference type="KEGG" id="ecj:JW1938"/>
<dbReference type="KEGG" id="eco:b1955"/>
<dbReference type="KEGG" id="ecoc:C3026_11060"/>
<dbReference type="PATRIC" id="fig|1411691.4.peg.297"/>
<dbReference type="EchoBASE" id="EB3793"/>
<dbReference type="eggNOG" id="COG3769">
    <property type="taxonomic scope" value="Bacteria"/>
</dbReference>
<dbReference type="HOGENOM" id="CLU_063016_1_0_6"/>
<dbReference type="InParanoid" id="P76329"/>
<dbReference type="OMA" id="KGNRMSH"/>
<dbReference type="OrthoDB" id="193379at2"/>
<dbReference type="PhylomeDB" id="P76329"/>
<dbReference type="BioCyc" id="EcoCyc:G7048-MONOMER"/>
<dbReference type="EvolutionaryTrace" id="P76329"/>
<dbReference type="PRO" id="PR:P76329"/>
<dbReference type="Proteomes" id="UP000000625">
    <property type="component" value="Chromosome"/>
</dbReference>
<dbReference type="GO" id="GO:0005829">
    <property type="term" value="C:cytosol"/>
    <property type="evidence" value="ECO:0000318"/>
    <property type="project" value="GO_Central"/>
</dbReference>
<dbReference type="GO" id="GO:0000287">
    <property type="term" value="F:magnesium ion binding"/>
    <property type="evidence" value="ECO:0000318"/>
    <property type="project" value="GO_Central"/>
</dbReference>
<dbReference type="GO" id="GO:0050531">
    <property type="term" value="F:mannosyl-3-phosphoglycerate phosphatase activity"/>
    <property type="evidence" value="ECO:0007669"/>
    <property type="project" value="UniProtKB-UniRule"/>
</dbReference>
<dbReference type="GO" id="GO:0016791">
    <property type="term" value="F:phosphatase activity"/>
    <property type="evidence" value="ECO:0000318"/>
    <property type="project" value="GO_Central"/>
</dbReference>
<dbReference type="GO" id="GO:0051479">
    <property type="term" value="P:mannosylglycerate biosynthetic process"/>
    <property type="evidence" value="ECO:0007669"/>
    <property type="project" value="InterPro"/>
</dbReference>
<dbReference type="CDD" id="cd07507">
    <property type="entry name" value="HAD_Pase"/>
    <property type="match status" value="1"/>
</dbReference>
<dbReference type="Gene3D" id="3.40.50.1000">
    <property type="entry name" value="HAD superfamily/HAD-like"/>
    <property type="match status" value="1"/>
</dbReference>
<dbReference type="Gene3D" id="3.30.980.20">
    <property type="entry name" value="Putative mannosyl-3-phosphoglycerate phosphatase, domain 2"/>
    <property type="match status" value="1"/>
</dbReference>
<dbReference type="HAMAP" id="MF_00617">
    <property type="entry name" value="MPGP_rel"/>
    <property type="match status" value="1"/>
</dbReference>
<dbReference type="InterPro" id="IPR036412">
    <property type="entry name" value="HAD-like_sf"/>
</dbReference>
<dbReference type="InterPro" id="IPR006381">
    <property type="entry name" value="HAD-SF-IIB-MPGP"/>
</dbReference>
<dbReference type="InterPro" id="IPR006379">
    <property type="entry name" value="HAD-SF_hydro_IIB"/>
</dbReference>
<dbReference type="InterPro" id="IPR023214">
    <property type="entry name" value="HAD_sf"/>
</dbReference>
<dbReference type="InterPro" id="IPR012815">
    <property type="entry name" value="MPG_Pase"/>
</dbReference>
<dbReference type="NCBIfam" id="TIGR01484">
    <property type="entry name" value="HAD-SF-IIB"/>
    <property type="match status" value="1"/>
</dbReference>
<dbReference type="NCBIfam" id="TIGR01486">
    <property type="entry name" value="HAD-SF-IIB-MPGP"/>
    <property type="match status" value="1"/>
</dbReference>
<dbReference type="NCBIfam" id="TIGR02463">
    <property type="entry name" value="MPGP_rel"/>
    <property type="match status" value="1"/>
</dbReference>
<dbReference type="NCBIfam" id="NF002976">
    <property type="entry name" value="PRK03669.1"/>
    <property type="match status" value="1"/>
</dbReference>
<dbReference type="PANTHER" id="PTHR10000:SF8">
    <property type="entry name" value="HAD SUPERFAMILY HYDROLASE-LIKE, TYPE 3"/>
    <property type="match status" value="1"/>
</dbReference>
<dbReference type="PANTHER" id="PTHR10000">
    <property type="entry name" value="PHOSPHOSERINE PHOSPHATASE"/>
    <property type="match status" value="1"/>
</dbReference>
<dbReference type="Pfam" id="PF08282">
    <property type="entry name" value="Hydrolase_3"/>
    <property type="match status" value="1"/>
</dbReference>
<dbReference type="SFLD" id="SFLDG01142">
    <property type="entry name" value="C2.B.2:_Mannosyl-3-phosphoglyc"/>
    <property type="match status" value="1"/>
</dbReference>
<dbReference type="SFLD" id="SFLDS00003">
    <property type="entry name" value="Haloacid_Dehalogenase"/>
    <property type="match status" value="1"/>
</dbReference>
<dbReference type="SUPFAM" id="SSF56784">
    <property type="entry name" value="HAD-like"/>
    <property type="match status" value="1"/>
</dbReference>
<proteinExistence type="evidence at protein level"/>
<accession>P76329</accession>
<accession>Q2MB01</accession>